<feature type="chain" id="PRO_0000324381" description="Capsid protein">
    <location>
        <begin position="1"/>
        <end position="182"/>
    </location>
</feature>
<feature type="repeat" description="1">
    <location>
        <begin position="161"/>
        <end position="168"/>
    </location>
</feature>
<feature type="repeat" description="2">
    <location>
        <begin position="169"/>
        <end position="176"/>
    </location>
</feature>
<feature type="region of interest" description="Disordered" evidence="2">
    <location>
        <begin position="136"/>
        <end position="182"/>
    </location>
</feature>
<feature type="region of interest" description="2 X 8 AA repeats of S-P-R-R-R-[PR]-S-Q">
    <location>
        <begin position="161"/>
        <end position="176"/>
    </location>
</feature>
<feature type="region of interest" description="RNA binding" evidence="1">
    <location>
        <begin position="176"/>
        <end position="182"/>
    </location>
</feature>
<feature type="short sequence motif" description="Bipartite nuclear localization signal" evidence="1">
    <location>
        <begin position="157"/>
        <end position="174"/>
    </location>
</feature>
<feature type="compositionally biased region" description="Basic residues" evidence="2">
    <location>
        <begin position="149"/>
        <end position="175"/>
    </location>
</feature>
<feature type="modified residue" description="Phosphoserine; by host" evidence="1">
    <location>
        <position position="161"/>
    </location>
</feature>
<feature type="modified residue" description="Phosphoserine; by host" evidence="1">
    <location>
        <position position="169"/>
    </location>
</feature>
<organism>
    <name type="scientific">Woolly monkey hepatitis B virus (isolate Louisville)</name>
    <name type="common">WMHBV</name>
    <dbReference type="NCBI Taxonomy" id="490134"/>
    <lineage>
        <taxon>Viruses</taxon>
        <taxon>Riboviria</taxon>
        <taxon>Pararnavirae</taxon>
        <taxon>Artverviricota</taxon>
        <taxon>Revtraviricetes</taxon>
        <taxon>Blubervirales</taxon>
        <taxon>Hepadnaviridae</taxon>
        <taxon>Orthohepadnavirus</taxon>
        <taxon>Woolly monkey hepatitis B virus</taxon>
    </lineage>
</organism>
<dbReference type="EMBL" id="AF046996">
    <property type="protein sequence ID" value="AAC16904.1"/>
    <property type="molecule type" value="Genomic_DNA"/>
</dbReference>
<dbReference type="SMR" id="O71303"/>
<dbReference type="Proteomes" id="UP000008599">
    <property type="component" value="Segment"/>
</dbReference>
<dbReference type="GO" id="GO:0043657">
    <property type="term" value="C:host cell"/>
    <property type="evidence" value="ECO:0007669"/>
    <property type="project" value="GOC"/>
</dbReference>
<dbReference type="GO" id="GO:0030430">
    <property type="term" value="C:host cell cytoplasm"/>
    <property type="evidence" value="ECO:0007669"/>
    <property type="project" value="UniProtKB-SubCell"/>
</dbReference>
<dbReference type="GO" id="GO:0039619">
    <property type="term" value="C:T=4 icosahedral viral capsid"/>
    <property type="evidence" value="ECO:0007669"/>
    <property type="project" value="UniProtKB-UniRule"/>
</dbReference>
<dbReference type="GO" id="GO:0003677">
    <property type="term" value="F:DNA binding"/>
    <property type="evidence" value="ECO:0007669"/>
    <property type="project" value="UniProtKB-UniRule"/>
</dbReference>
<dbReference type="GO" id="GO:0003723">
    <property type="term" value="F:RNA binding"/>
    <property type="evidence" value="ECO:0007669"/>
    <property type="project" value="UniProtKB-UniRule"/>
</dbReference>
<dbReference type="GO" id="GO:0005198">
    <property type="term" value="F:structural molecule activity"/>
    <property type="evidence" value="ECO:0007669"/>
    <property type="project" value="UniProtKB-UniRule"/>
</dbReference>
<dbReference type="GO" id="GO:0075521">
    <property type="term" value="P:microtubule-dependent intracellular transport of viral material towards nucleus"/>
    <property type="evidence" value="ECO:0007669"/>
    <property type="project" value="UniProtKB-UniRule"/>
</dbReference>
<dbReference type="GO" id="GO:0046718">
    <property type="term" value="P:symbiont entry into host cell"/>
    <property type="evidence" value="ECO:0007669"/>
    <property type="project" value="UniProtKB-UniRule"/>
</dbReference>
<dbReference type="GO" id="GO:0075732">
    <property type="term" value="P:viral penetration into host nucleus"/>
    <property type="evidence" value="ECO:0007669"/>
    <property type="project" value="UniProtKB-UniRule"/>
</dbReference>
<dbReference type="FunFam" id="1.10.4090.10:FF:000001">
    <property type="entry name" value="Capsid protein"/>
    <property type="match status" value="1"/>
</dbReference>
<dbReference type="Gene3D" id="1.10.4090.10">
    <property type="entry name" value="Viral capsid, core domain supefamily, Hepatitis B virus"/>
    <property type="match status" value="1"/>
</dbReference>
<dbReference type="HAMAP" id="MF_04076">
    <property type="entry name" value="HBV_HBEAG"/>
    <property type="match status" value="1"/>
</dbReference>
<dbReference type="InterPro" id="IPR002006">
    <property type="entry name" value="Hepatitis_core"/>
</dbReference>
<dbReference type="InterPro" id="IPR036459">
    <property type="entry name" value="Viral_capsid_core_dom_sf_HBV"/>
</dbReference>
<dbReference type="Pfam" id="PF00906">
    <property type="entry name" value="Hepatitis_core"/>
    <property type="match status" value="3"/>
</dbReference>
<dbReference type="SUPFAM" id="SSF47852">
    <property type="entry name" value="Hepatitis B viral capsid (hbcag)"/>
    <property type="match status" value="1"/>
</dbReference>
<accession>O71303</accession>
<protein>
    <recommendedName>
        <fullName evidence="1">Capsid protein</fullName>
    </recommendedName>
    <alternativeName>
        <fullName evidence="1">Core antigen</fullName>
    </alternativeName>
    <alternativeName>
        <fullName evidence="1">Core protein</fullName>
    </alternativeName>
    <alternativeName>
        <fullName evidence="1">HBcAg</fullName>
    </alternativeName>
    <alternativeName>
        <fullName evidence="1">p21.5</fullName>
    </alternativeName>
</protein>
<name>CAPSD_WMHBV</name>
<sequence length="182" mass="20845">MDIDPYKEFGATVELLSFLPADFFPSVRDLLDTASALYREALESSDHCSPHHTALRQTVLCWGELMSLASWVGTNLEDPAARELVVSYVNDNMGLKVRQLLWFHISCLTFGRETVLEYLVSFWVWIRTPPAYRPPNAPILSTLPETTVVRRRRPSGRRTPSPRRRRSQSPRRRRSQSPASSC</sequence>
<proteinExistence type="inferred from homology"/>
<evidence type="ECO:0000255" key="1">
    <source>
        <dbReference type="HAMAP-Rule" id="MF_04076"/>
    </source>
</evidence>
<evidence type="ECO:0000256" key="2">
    <source>
        <dbReference type="SAM" id="MobiDB-lite"/>
    </source>
</evidence>
<keyword id="KW-0024">Alternative initiation</keyword>
<keyword id="KW-0167">Capsid protein</keyword>
<keyword id="KW-1176">Cytoplasmic inwards viral transport</keyword>
<keyword id="KW-0238">DNA-binding</keyword>
<keyword id="KW-1035">Host cytoplasm</keyword>
<keyword id="KW-0945">Host-virus interaction</keyword>
<keyword id="KW-1177">Microtubular inwards viral transport</keyword>
<keyword id="KW-0597">Phosphoprotein</keyword>
<keyword id="KW-0677">Repeat</keyword>
<keyword id="KW-0694">RNA-binding</keyword>
<keyword id="KW-1144">T=4 icosahedral capsid protein</keyword>
<keyword id="KW-1163">Viral penetration into host nucleus</keyword>
<keyword id="KW-0946">Virion</keyword>
<keyword id="KW-1160">Virus entry into host cell</keyword>
<reference key="1">
    <citation type="journal article" date="1998" name="Proc. Natl. Acad. Sci. U.S.A.">
        <title>Isolation of a hepadnavirus from the woolly monkey, a New World primate.</title>
        <authorList>
            <person name="Lanford R.E."/>
            <person name="Chavez D."/>
            <person name="Brasky K.M."/>
            <person name="Burns R.B. III"/>
            <person name="Rico-Hesse R."/>
        </authorList>
    </citation>
    <scope>NUCLEOTIDE SEQUENCE [GENOMIC DNA]</scope>
</reference>
<comment type="function">
    <text evidence="1">Self assembles to form an icosahedral capsid. Most capsids appear to be large particles with an icosahedral symmetry of T=4 and consist of 240 copies of capsid protein, though a fraction forms smaller T=3 particles consisting of 180 capsid proteins. Entering capsids are transported along microtubules to the nucleus. Phosphorylation of the capsid is thought to induce exposure of nuclear localization signal in the C-terminal portion of the capsid protein that allows binding to the nuclear pore complex via the importin (karyopherin-) alpha and beta. Capsids are imported in intact form through the nuclear pore into the nuclear basket, where it probably binds NUP153. Only capsids that contain the mature viral genome can release the viral DNA and capsid protein into the nucleoplasm. Immature capsids get stuck in the basket. Capsids encapsulate the pre-genomic RNA and the P protein. Pre-genomic RNA is reverse-transcribed into DNA while the capsid is still in the cytoplasm. The capsid can then either be directed to the nucleus, providing more genomes for transcription, or bud through the endoplasmic reticulum to provide new virions.</text>
</comment>
<comment type="subunit">
    <text evidence="1">Homodimerizes, then multimerizes. Interacts with cytosol exposed regions of viral L glycoprotein present in the reticulum-to-Golgi compartment. Interacts with human FLNB. Phosphorylated form interacts with host importin alpha; this interaction depends on the exposure of the NLS, which itself depends upon genome maturation and/or phosphorylation of the capsid protein. Interacts with host NUP153.</text>
</comment>
<comment type="subcellular location">
    <subcellularLocation>
        <location evidence="1">Virion</location>
    </subcellularLocation>
    <subcellularLocation>
        <location evidence="1">Host cytoplasm</location>
    </subcellularLocation>
</comment>
<comment type="alternative products">
    <event type="alternative initiation"/>
    <isoform>
        <id>O71303-1</id>
        <name>Capsid protein</name>
        <sequence type="displayed"/>
    </isoform>
    <isoform>
        <id>P0C6J0-1</id>
        <name>External core antigen</name>
        <sequence type="external"/>
    </isoform>
</comment>
<comment type="PTM">
    <text evidence="1">Phosphorylated by host SRPK1, SRPK2, and maybe protein kinase C or GAPDH. Phosphorylation is critical for pregenomic RNA packaging. Protein kinase C phosphorylation is stimulated by HBx protein and may play a role in transport of the viral genome to the nucleus at the late step during the viral replication cycle.</text>
</comment>
<comment type="similarity">
    <text evidence="1">Belongs to the orthohepadnavirus core antigen family.</text>
</comment>
<gene>
    <name evidence="1" type="primary">C</name>
</gene>
<organismHost>
    <name type="scientific">Lagothrix lagotricha</name>
    <name type="common">Brown woolly monkey</name>
    <name type="synonym">Humboldt's woolly monkey</name>
    <dbReference type="NCBI Taxonomy" id="9519"/>
</organismHost>